<sequence>MRGTRLALLALVLAACGELAPALRCYVCPEPTGVSDCVTIATCTTNETMCKTTLYSREIVYPFQGDSTVTKSCASKCKPSDVDGIGQTLPVSCCNTELCNVDGAPALNSLHCGALTLLPLLSLRL</sequence>
<feature type="signal peptide" evidence="1">
    <location>
        <begin position="1"/>
        <end position="22"/>
    </location>
</feature>
<feature type="chain" id="PRO_0000226747" description="Ly6/PLAUR domain-containing protein 2">
    <location>
        <begin position="23"/>
        <end position="103"/>
    </location>
</feature>
<feature type="propeptide" id="PRO_0000226748" description="Removed in mature form" evidence="1">
    <location>
        <begin position="104"/>
        <end position="125"/>
    </location>
</feature>
<feature type="domain" description="UPAR/Ly6">
    <location>
        <begin position="25"/>
        <end position="100"/>
    </location>
</feature>
<feature type="lipid moiety-binding region" description="GPI-anchor amidated glycine" evidence="1">
    <location>
        <position position="103"/>
    </location>
</feature>
<feature type="glycosylation site" description="N-linked (GlcNAc...) asparagine" evidence="1">
    <location>
        <position position="46"/>
    </location>
</feature>
<feature type="sequence variant" id="VAR_052701" description="In dbSNP:rs11778314.">
    <original>R</original>
    <variation>Q</variation>
    <location>
        <position position="5"/>
    </location>
</feature>
<feature type="sequence variant" id="VAR_052702" description="In dbSNP:rs11775636.">
    <original>A</original>
    <variation>V</variation>
    <location>
        <position position="7"/>
    </location>
</feature>
<feature type="sequence conflict" description="In Ref. 2; BAF83020." evidence="2" ref="2">
    <original>T</original>
    <variation>A</variation>
    <location>
        <position position="4"/>
    </location>
</feature>
<feature type="sequence conflict" description="In Ref. 3; AAI19020." evidence="2" ref="3">
    <original>RLA</original>
    <variation>QLV</variation>
    <location>
        <begin position="5"/>
        <end position="7"/>
    </location>
</feature>
<organism>
    <name type="scientific">Homo sapiens</name>
    <name type="common">Human</name>
    <dbReference type="NCBI Taxonomy" id="9606"/>
    <lineage>
        <taxon>Eukaryota</taxon>
        <taxon>Metazoa</taxon>
        <taxon>Chordata</taxon>
        <taxon>Craniata</taxon>
        <taxon>Vertebrata</taxon>
        <taxon>Euteleostomi</taxon>
        <taxon>Mammalia</taxon>
        <taxon>Eutheria</taxon>
        <taxon>Euarchontoglires</taxon>
        <taxon>Primates</taxon>
        <taxon>Haplorrhini</taxon>
        <taxon>Catarrhini</taxon>
        <taxon>Hominidae</taxon>
        <taxon>Homo</taxon>
    </lineage>
</organism>
<gene>
    <name type="primary">LYPD2</name>
    <name type="synonym">LYPDC2</name>
    <name type="ORF">UNQ430/PRO788</name>
</gene>
<name>LYPD2_HUMAN</name>
<evidence type="ECO:0000255" key="1"/>
<evidence type="ECO:0000305" key="2"/>
<keyword id="KW-1003">Cell membrane</keyword>
<keyword id="KW-0325">Glycoprotein</keyword>
<keyword id="KW-0336">GPI-anchor</keyword>
<keyword id="KW-0449">Lipoprotein</keyword>
<keyword id="KW-0472">Membrane</keyword>
<keyword id="KW-1267">Proteomics identification</keyword>
<keyword id="KW-1185">Reference proteome</keyword>
<keyword id="KW-0732">Signal</keyword>
<dbReference type="EMBL" id="AY358432">
    <property type="protein sequence ID" value="AAQ88798.1"/>
    <property type="molecule type" value="mRNA"/>
</dbReference>
<dbReference type="EMBL" id="AK290331">
    <property type="protein sequence ID" value="BAF83020.1"/>
    <property type="molecule type" value="mRNA"/>
</dbReference>
<dbReference type="EMBL" id="BC119019">
    <property type="protein sequence ID" value="AAI19020.1"/>
    <property type="molecule type" value="mRNA"/>
</dbReference>
<dbReference type="EMBL" id="BC119812">
    <property type="protein sequence ID" value="AAI19813.1"/>
    <property type="molecule type" value="mRNA"/>
</dbReference>
<dbReference type="CCDS" id="CCDS6388.1"/>
<dbReference type="RefSeq" id="NP_991108.1">
    <property type="nucleotide sequence ID" value="NM_205545.3"/>
</dbReference>
<dbReference type="SMR" id="Q6UXB3"/>
<dbReference type="BioGRID" id="126484">
    <property type="interactions" value="16"/>
</dbReference>
<dbReference type="FunCoup" id="Q6UXB3">
    <property type="interactions" value="32"/>
</dbReference>
<dbReference type="IntAct" id="Q6UXB3">
    <property type="interactions" value="8"/>
</dbReference>
<dbReference type="STRING" id="9606.ENSP00000352163"/>
<dbReference type="GlyCosmos" id="Q6UXB3">
    <property type="glycosylation" value="1 site, No reported glycans"/>
</dbReference>
<dbReference type="GlyGen" id="Q6UXB3">
    <property type="glycosylation" value="1 site"/>
</dbReference>
<dbReference type="BioMuta" id="LYPD2"/>
<dbReference type="DMDM" id="74749418"/>
<dbReference type="jPOST" id="Q6UXB3"/>
<dbReference type="MassIVE" id="Q6UXB3"/>
<dbReference type="PaxDb" id="9606-ENSP00000352163"/>
<dbReference type="PeptideAtlas" id="Q6UXB3"/>
<dbReference type="ProteomicsDB" id="67584"/>
<dbReference type="Antibodypedia" id="27786">
    <property type="antibodies" value="34 antibodies from 9 providers"/>
</dbReference>
<dbReference type="DNASU" id="137797"/>
<dbReference type="Ensembl" id="ENST00000359228.4">
    <property type="protein sequence ID" value="ENSP00000352163.3"/>
    <property type="gene ID" value="ENSG00000197353.4"/>
</dbReference>
<dbReference type="GeneID" id="137797"/>
<dbReference type="KEGG" id="hsa:137797"/>
<dbReference type="MANE-Select" id="ENST00000359228.4">
    <property type="protein sequence ID" value="ENSP00000352163.3"/>
    <property type="RefSeq nucleotide sequence ID" value="NM_205545.3"/>
    <property type="RefSeq protein sequence ID" value="NP_991108.1"/>
</dbReference>
<dbReference type="UCSC" id="uc003ywz.4">
    <property type="organism name" value="human"/>
</dbReference>
<dbReference type="AGR" id="HGNC:25215"/>
<dbReference type="CTD" id="137797"/>
<dbReference type="GeneCards" id="LYPD2"/>
<dbReference type="HGNC" id="HGNC:25215">
    <property type="gene designation" value="LYPD2"/>
</dbReference>
<dbReference type="HPA" id="ENSG00000197353">
    <property type="expression patterns" value="Tissue enriched (esophagus)"/>
</dbReference>
<dbReference type="neXtProt" id="NX_Q6UXB3"/>
<dbReference type="OpenTargets" id="ENSG00000197353"/>
<dbReference type="PharmGKB" id="PA134911921"/>
<dbReference type="VEuPathDB" id="HostDB:ENSG00000197353"/>
<dbReference type="eggNOG" id="ENOG502SG63">
    <property type="taxonomic scope" value="Eukaryota"/>
</dbReference>
<dbReference type="GeneTree" id="ENSGT00940000162197"/>
<dbReference type="HOGENOM" id="CLU_141358_2_0_1"/>
<dbReference type="InParanoid" id="Q6UXB3"/>
<dbReference type="OMA" id="RCYVCPE"/>
<dbReference type="OrthoDB" id="9900838at2759"/>
<dbReference type="PAN-GO" id="Q6UXB3">
    <property type="GO annotations" value="0 GO annotations based on evolutionary models"/>
</dbReference>
<dbReference type="PhylomeDB" id="Q6UXB3"/>
<dbReference type="TreeFam" id="TF336080"/>
<dbReference type="PathwayCommons" id="Q6UXB3"/>
<dbReference type="Reactome" id="R-HSA-163125">
    <property type="pathway name" value="Post-translational modification: synthesis of GPI-anchored proteins"/>
</dbReference>
<dbReference type="SignaLink" id="Q6UXB3"/>
<dbReference type="BioGRID-ORCS" id="137797">
    <property type="hits" value="32 hits in 1143 CRISPR screens"/>
</dbReference>
<dbReference type="GenomeRNAi" id="137797"/>
<dbReference type="Pharos" id="Q6UXB3">
    <property type="development level" value="Tdark"/>
</dbReference>
<dbReference type="PRO" id="PR:Q6UXB3"/>
<dbReference type="Proteomes" id="UP000005640">
    <property type="component" value="Chromosome 8"/>
</dbReference>
<dbReference type="RNAct" id="Q6UXB3">
    <property type="molecule type" value="protein"/>
</dbReference>
<dbReference type="Bgee" id="ENSG00000197353">
    <property type="expression patterns" value="Expressed in lower esophagus mucosa and 65 other cell types or tissues"/>
</dbReference>
<dbReference type="ExpressionAtlas" id="Q6UXB3">
    <property type="expression patterns" value="baseline and differential"/>
</dbReference>
<dbReference type="GO" id="GO:0005576">
    <property type="term" value="C:extracellular region"/>
    <property type="evidence" value="ECO:0000304"/>
    <property type="project" value="Reactome"/>
</dbReference>
<dbReference type="GO" id="GO:0005886">
    <property type="term" value="C:plasma membrane"/>
    <property type="evidence" value="ECO:0000304"/>
    <property type="project" value="Reactome"/>
</dbReference>
<dbReference type="GO" id="GO:0098552">
    <property type="term" value="C:side of membrane"/>
    <property type="evidence" value="ECO:0007669"/>
    <property type="project" value="UniProtKB-KW"/>
</dbReference>
<dbReference type="CDD" id="cd23620">
    <property type="entry name" value="TFP_LU_ECD_LYPD2"/>
    <property type="match status" value="1"/>
</dbReference>
<dbReference type="FunFam" id="2.10.60.10:FF:000003">
    <property type="entry name" value="lymphocyte antigen 6E isoform X1"/>
    <property type="match status" value="1"/>
</dbReference>
<dbReference type="Gene3D" id="2.10.60.10">
    <property type="entry name" value="CD59"/>
    <property type="match status" value="1"/>
</dbReference>
<dbReference type="InterPro" id="IPR018363">
    <property type="entry name" value="CD59_antigen_CS"/>
</dbReference>
<dbReference type="InterPro" id="IPR051110">
    <property type="entry name" value="Ly-6/neurotoxin-like_GPI-ap"/>
</dbReference>
<dbReference type="InterPro" id="IPR016054">
    <property type="entry name" value="LY6_UPA_recep-like"/>
</dbReference>
<dbReference type="InterPro" id="IPR045860">
    <property type="entry name" value="Snake_toxin-like_sf"/>
</dbReference>
<dbReference type="InterPro" id="IPR035076">
    <property type="entry name" value="Toxin/TOLIP"/>
</dbReference>
<dbReference type="PANTHER" id="PTHR16983">
    <property type="entry name" value="UPAR/LY6 DOMAIN-CONTAINING PROTEIN"/>
    <property type="match status" value="1"/>
</dbReference>
<dbReference type="PANTHER" id="PTHR16983:SF16">
    <property type="entry name" value="UPAR_LY6 DOMAIN-CONTAINING PROTEIN"/>
    <property type="match status" value="1"/>
</dbReference>
<dbReference type="Pfam" id="PF00087">
    <property type="entry name" value="Toxin_TOLIP"/>
    <property type="match status" value="1"/>
</dbReference>
<dbReference type="SMART" id="SM00134">
    <property type="entry name" value="LU"/>
    <property type="match status" value="1"/>
</dbReference>
<dbReference type="SUPFAM" id="SSF57302">
    <property type="entry name" value="Snake toxin-like"/>
    <property type="match status" value="1"/>
</dbReference>
<dbReference type="PROSITE" id="PS00983">
    <property type="entry name" value="LY6_UPAR"/>
    <property type="match status" value="1"/>
</dbReference>
<protein>
    <recommendedName>
        <fullName>Ly6/PLAUR domain-containing protein 2</fullName>
    </recommendedName>
</protein>
<comment type="interaction">
    <interactant intactId="EBI-18270828">
        <id>Q6UXB3</id>
    </interactant>
    <interactant intactId="EBI-17236143">
        <id>Q12837</id>
        <label>POU4F2</label>
    </interactant>
    <organismsDiffer>false</organismsDiffer>
    <experiments>3</experiments>
</comment>
<comment type="subcellular location">
    <subcellularLocation>
        <location evidence="2">Cell membrane</location>
        <topology evidence="2">Lipid-anchor</topology>
        <topology evidence="2">GPI-anchor</topology>
    </subcellularLocation>
</comment>
<reference key="1">
    <citation type="journal article" date="2003" name="Genome Res.">
        <title>The secreted protein discovery initiative (SPDI), a large-scale effort to identify novel human secreted and transmembrane proteins: a bioinformatics assessment.</title>
        <authorList>
            <person name="Clark H.F."/>
            <person name="Gurney A.L."/>
            <person name="Abaya E."/>
            <person name="Baker K."/>
            <person name="Baldwin D.T."/>
            <person name="Brush J."/>
            <person name="Chen J."/>
            <person name="Chow B."/>
            <person name="Chui C."/>
            <person name="Crowley C."/>
            <person name="Currell B."/>
            <person name="Deuel B."/>
            <person name="Dowd P."/>
            <person name="Eaton D."/>
            <person name="Foster J.S."/>
            <person name="Grimaldi C."/>
            <person name="Gu Q."/>
            <person name="Hass P.E."/>
            <person name="Heldens S."/>
            <person name="Huang A."/>
            <person name="Kim H.S."/>
            <person name="Klimowski L."/>
            <person name="Jin Y."/>
            <person name="Johnson S."/>
            <person name="Lee J."/>
            <person name="Lewis L."/>
            <person name="Liao D."/>
            <person name="Mark M.R."/>
            <person name="Robbie E."/>
            <person name="Sanchez C."/>
            <person name="Schoenfeld J."/>
            <person name="Seshagiri S."/>
            <person name="Simmons L."/>
            <person name="Singh J."/>
            <person name="Smith V."/>
            <person name="Stinson J."/>
            <person name="Vagts A."/>
            <person name="Vandlen R.L."/>
            <person name="Watanabe C."/>
            <person name="Wieand D."/>
            <person name="Woods K."/>
            <person name="Xie M.-H."/>
            <person name="Yansura D.G."/>
            <person name="Yi S."/>
            <person name="Yu G."/>
            <person name="Yuan J."/>
            <person name="Zhang M."/>
            <person name="Zhang Z."/>
            <person name="Goddard A.D."/>
            <person name="Wood W.I."/>
            <person name="Godowski P.J."/>
            <person name="Gray A.M."/>
        </authorList>
    </citation>
    <scope>NUCLEOTIDE SEQUENCE [LARGE SCALE MRNA]</scope>
</reference>
<reference key="2">
    <citation type="journal article" date="2004" name="Nat. Genet.">
        <title>Complete sequencing and characterization of 21,243 full-length human cDNAs.</title>
        <authorList>
            <person name="Ota T."/>
            <person name="Suzuki Y."/>
            <person name="Nishikawa T."/>
            <person name="Otsuki T."/>
            <person name="Sugiyama T."/>
            <person name="Irie R."/>
            <person name="Wakamatsu A."/>
            <person name="Hayashi K."/>
            <person name="Sato H."/>
            <person name="Nagai K."/>
            <person name="Kimura K."/>
            <person name="Makita H."/>
            <person name="Sekine M."/>
            <person name="Obayashi M."/>
            <person name="Nishi T."/>
            <person name="Shibahara T."/>
            <person name="Tanaka T."/>
            <person name="Ishii S."/>
            <person name="Yamamoto J."/>
            <person name="Saito K."/>
            <person name="Kawai Y."/>
            <person name="Isono Y."/>
            <person name="Nakamura Y."/>
            <person name="Nagahari K."/>
            <person name="Murakami K."/>
            <person name="Yasuda T."/>
            <person name="Iwayanagi T."/>
            <person name="Wagatsuma M."/>
            <person name="Shiratori A."/>
            <person name="Sudo H."/>
            <person name="Hosoiri T."/>
            <person name="Kaku Y."/>
            <person name="Kodaira H."/>
            <person name="Kondo H."/>
            <person name="Sugawara M."/>
            <person name="Takahashi M."/>
            <person name="Kanda K."/>
            <person name="Yokoi T."/>
            <person name="Furuya T."/>
            <person name="Kikkawa E."/>
            <person name="Omura Y."/>
            <person name="Abe K."/>
            <person name="Kamihara K."/>
            <person name="Katsuta N."/>
            <person name="Sato K."/>
            <person name="Tanikawa M."/>
            <person name="Yamazaki M."/>
            <person name="Ninomiya K."/>
            <person name="Ishibashi T."/>
            <person name="Yamashita H."/>
            <person name="Murakawa K."/>
            <person name="Fujimori K."/>
            <person name="Tanai H."/>
            <person name="Kimata M."/>
            <person name="Watanabe M."/>
            <person name="Hiraoka S."/>
            <person name="Chiba Y."/>
            <person name="Ishida S."/>
            <person name="Ono Y."/>
            <person name="Takiguchi S."/>
            <person name="Watanabe S."/>
            <person name="Yosida M."/>
            <person name="Hotuta T."/>
            <person name="Kusano J."/>
            <person name="Kanehori K."/>
            <person name="Takahashi-Fujii A."/>
            <person name="Hara H."/>
            <person name="Tanase T.-O."/>
            <person name="Nomura Y."/>
            <person name="Togiya S."/>
            <person name="Komai F."/>
            <person name="Hara R."/>
            <person name="Takeuchi K."/>
            <person name="Arita M."/>
            <person name="Imose N."/>
            <person name="Musashino K."/>
            <person name="Yuuki H."/>
            <person name="Oshima A."/>
            <person name="Sasaki N."/>
            <person name="Aotsuka S."/>
            <person name="Yoshikawa Y."/>
            <person name="Matsunawa H."/>
            <person name="Ichihara T."/>
            <person name="Shiohata N."/>
            <person name="Sano S."/>
            <person name="Moriya S."/>
            <person name="Momiyama H."/>
            <person name="Satoh N."/>
            <person name="Takami S."/>
            <person name="Terashima Y."/>
            <person name="Suzuki O."/>
            <person name="Nakagawa S."/>
            <person name="Senoh A."/>
            <person name="Mizoguchi H."/>
            <person name="Goto Y."/>
            <person name="Shimizu F."/>
            <person name="Wakebe H."/>
            <person name="Hishigaki H."/>
            <person name="Watanabe T."/>
            <person name="Sugiyama A."/>
            <person name="Takemoto M."/>
            <person name="Kawakami B."/>
            <person name="Yamazaki M."/>
            <person name="Watanabe K."/>
            <person name="Kumagai A."/>
            <person name="Itakura S."/>
            <person name="Fukuzumi Y."/>
            <person name="Fujimori Y."/>
            <person name="Komiyama M."/>
            <person name="Tashiro H."/>
            <person name="Tanigami A."/>
            <person name="Fujiwara T."/>
            <person name="Ono T."/>
            <person name="Yamada K."/>
            <person name="Fujii Y."/>
            <person name="Ozaki K."/>
            <person name="Hirao M."/>
            <person name="Ohmori Y."/>
            <person name="Kawabata A."/>
            <person name="Hikiji T."/>
            <person name="Kobatake N."/>
            <person name="Inagaki H."/>
            <person name="Ikema Y."/>
            <person name="Okamoto S."/>
            <person name="Okitani R."/>
            <person name="Kawakami T."/>
            <person name="Noguchi S."/>
            <person name="Itoh T."/>
            <person name="Shigeta K."/>
            <person name="Senba T."/>
            <person name="Matsumura K."/>
            <person name="Nakajima Y."/>
            <person name="Mizuno T."/>
            <person name="Morinaga M."/>
            <person name="Sasaki M."/>
            <person name="Togashi T."/>
            <person name="Oyama M."/>
            <person name="Hata H."/>
            <person name="Watanabe M."/>
            <person name="Komatsu T."/>
            <person name="Mizushima-Sugano J."/>
            <person name="Satoh T."/>
            <person name="Shirai Y."/>
            <person name="Takahashi Y."/>
            <person name="Nakagawa K."/>
            <person name="Okumura K."/>
            <person name="Nagase T."/>
            <person name="Nomura N."/>
            <person name="Kikuchi H."/>
            <person name="Masuho Y."/>
            <person name="Yamashita R."/>
            <person name="Nakai K."/>
            <person name="Yada T."/>
            <person name="Nakamura Y."/>
            <person name="Ohara O."/>
            <person name="Isogai T."/>
            <person name="Sugano S."/>
        </authorList>
    </citation>
    <scope>NUCLEOTIDE SEQUENCE [LARGE SCALE MRNA]</scope>
    <source>
        <tissue>Tongue</tissue>
    </source>
</reference>
<reference key="3">
    <citation type="journal article" date="2004" name="Genome Res.">
        <title>The status, quality, and expansion of the NIH full-length cDNA project: the Mammalian Gene Collection (MGC).</title>
        <authorList>
            <consortium name="The MGC Project Team"/>
        </authorList>
    </citation>
    <scope>NUCLEOTIDE SEQUENCE [LARGE SCALE MRNA]</scope>
</reference>
<accession>Q6UXB3</accession>
<accession>A8K2R6</accession>
<accession>Q0VD64</accession>
<accession>Q0VF31</accession>
<proteinExistence type="evidence at protein level"/>